<organism>
    <name type="scientific">Escherichia coli O127:H6 (strain E2348/69 / EPEC)</name>
    <dbReference type="NCBI Taxonomy" id="574521"/>
    <lineage>
        <taxon>Bacteria</taxon>
        <taxon>Pseudomonadati</taxon>
        <taxon>Pseudomonadota</taxon>
        <taxon>Gammaproteobacteria</taxon>
        <taxon>Enterobacterales</taxon>
        <taxon>Enterobacteriaceae</taxon>
        <taxon>Escherichia</taxon>
    </lineage>
</organism>
<gene>
    <name evidence="1" type="primary">cysG</name>
    <name type="ordered locus">E2348C_3618</name>
</gene>
<accession>B7UK79</accession>
<protein>
    <recommendedName>
        <fullName evidence="1">Siroheme synthase</fullName>
    </recommendedName>
    <domain>
        <recommendedName>
            <fullName evidence="1">Uroporphyrinogen-III C-methyltransferase</fullName>
            <shortName evidence="1">Urogen III methylase</shortName>
            <ecNumber evidence="1">2.1.1.107</ecNumber>
        </recommendedName>
        <alternativeName>
            <fullName evidence="1">SUMT</fullName>
        </alternativeName>
        <alternativeName>
            <fullName evidence="1">Uroporphyrinogen III methylase</fullName>
            <shortName evidence="1">UROM</shortName>
        </alternativeName>
    </domain>
    <domain>
        <recommendedName>
            <fullName evidence="1">Precorrin-2 dehydrogenase</fullName>
            <ecNumber evidence="1">1.3.1.76</ecNumber>
        </recommendedName>
    </domain>
    <domain>
        <recommendedName>
            <fullName evidence="1">Sirohydrochlorin ferrochelatase</fullName>
            <ecNumber evidence="1">4.99.1.4</ecNumber>
        </recommendedName>
    </domain>
</protein>
<sequence length="457" mass="49977">MDHLPIFCQLRDRDCLIVGGGDVAERKARLLLDAGARLTVNALAFIPQFTAWADAGMLTLVEGPFDESLLDTCWLAIAATDDDALNQRVSEAAEARRIFCNVVDAPKAASFIMPSIIDRSPLMVAVSSGGTSPVLARLLREKLESLLPLHLGQVAKYAGQLRGRVKQQFATMGERRRFWEKLFVNDRLAQSLANNDQKAITETTEQLINEPLDHRGEVVLVGAGPGDAGLLTLKGLQQIQQADVVVYDRLVSDDIMNLVRRDADRVFVGKRAGYHCVPQEEINQILLREAQKGKRVVRLKGGDPFIFGRGGEELETLCNAGIPFSVVPGITAASGCSAYSGIPLTHRDYAQSVRLITGHLKTGGELDWENLAAEKQTLVFYMGLNQAATIQQKLIEYGMPGEMPVAIVENGTAVTQRVIDGTLTQLGELAQQMNSPSLIIIGRVVGLRDKLNWFSNH</sequence>
<evidence type="ECO:0000255" key="1">
    <source>
        <dbReference type="HAMAP-Rule" id="MF_01646"/>
    </source>
</evidence>
<proteinExistence type="inferred from homology"/>
<feature type="chain" id="PRO_1000186936" description="Siroheme synthase">
    <location>
        <begin position="1"/>
        <end position="457"/>
    </location>
</feature>
<feature type="region of interest" description="Precorrin-2 dehydrogenase /sirohydrochlorin ferrochelatase" evidence="1">
    <location>
        <begin position="1"/>
        <end position="204"/>
    </location>
</feature>
<feature type="region of interest" description="Uroporphyrinogen-III C-methyltransferase" evidence="1">
    <location>
        <begin position="216"/>
        <end position="457"/>
    </location>
</feature>
<feature type="active site" description="Proton acceptor" evidence="1">
    <location>
        <position position="248"/>
    </location>
</feature>
<feature type="active site" description="Proton donor" evidence="1">
    <location>
        <position position="270"/>
    </location>
</feature>
<feature type="binding site" evidence="1">
    <location>
        <begin position="22"/>
        <end position="23"/>
    </location>
    <ligand>
        <name>NAD(+)</name>
        <dbReference type="ChEBI" id="CHEBI:57540"/>
    </ligand>
</feature>
<feature type="binding site" evidence="1">
    <location>
        <begin position="43"/>
        <end position="44"/>
    </location>
    <ligand>
        <name>NAD(+)</name>
        <dbReference type="ChEBI" id="CHEBI:57540"/>
    </ligand>
</feature>
<feature type="binding site" evidence="1">
    <location>
        <position position="225"/>
    </location>
    <ligand>
        <name>S-adenosyl-L-methionine</name>
        <dbReference type="ChEBI" id="CHEBI:59789"/>
    </ligand>
</feature>
<feature type="binding site" evidence="1">
    <location>
        <begin position="301"/>
        <end position="303"/>
    </location>
    <ligand>
        <name>S-adenosyl-L-methionine</name>
        <dbReference type="ChEBI" id="CHEBI:59789"/>
    </ligand>
</feature>
<feature type="binding site" evidence="1">
    <location>
        <position position="306"/>
    </location>
    <ligand>
        <name>S-adenosyl-L-methionine</name>
        <dbReference type="ChEBI" id="CHEBI:59789"/>
    </ligand>
</feature>
<feature type="binding site" evidence="1">
    <location>
        <begin position="331"/>
        <end position="332"/>
    </location>
    <ligand>
        <name>S-adenosyl-L-methionine</name>
        <dbReference type="ChEBI" id="CHEBI:59789"/>
    </ligand>
</feature>
<feature type="binding site" evidence="1">
    <location>
        <position position="382"/>
    </location>
    <ligand>
        <name>S-adenosyl-L-methionine</name>
        <dbReference type="ChEBI" id="CHEBI:59789"/>
    </ligand>
</feature>
<feature type="binding site" evidence="1">
    <location>
        <position position="411"/>
    </location>
    <ligand>
        <name>S-adenosyl-L-methionine</name>
        <dbReference type="ChEBI" id="CHEBI:59789"/>
    </ligand>
</feature>
<feature type="modified residue" description="Phosphoserine" evidence="1">
    <location>
        <position position="128"/>
    </location>
</feature>
<keyword id="KW-0169">Cobalamin biosynthesis</keyword>
<keyword id="KW-0456">Lyase</keyword>
<keyword id="KW-0489">Methyltransferase</keyword>
<keyword id="KW-0511">Multifunctional enzyme</keyword>
<keyword id="KW-0520">NAD</keyword>
<keyword id="KW-0560">Oxidoreductase</keyword>
<keyword id="KW-0597">Phosphoprotein</keyword>
<keyword id="KW-0627">Porphyrin biosynthesis</keyword>
<keyword id="KW-1185">Reference proteome</keyword>
<keyword id="KW-0949">S-adenosyl-L-methionine</keyword>
<keyword id="KW-0808">Transferase</keyword>
<dbReference type="EC" id="2.1.1.107" evidence="1"/>
<dbReference type="EC" id="1.3.1.76" evidence="1"/>
<dbReference type="EC" id="4.99.1.4" evidence="1"/>
<dbReference type="EMBL" id="FM180568">
    <property type="protein sequence ID" value="CAS11166.1"/>
    <property type="molecule type" value="Genomic_DNA"/>
</dbReference>
<dbReference type="RefSeq" id="WP_000349860.1">
    <property type="nucleotide sequence ID" value="NC_011601.1"/>
</dbReference>
<dbReference type="SMR" id="B7UK79"/>
<dbReference type="KEGG" id="ecg:E2348C_3618"/>
<dbReference type="HOGENOM" id="CLU_011276_2_0_6"/>
<dbReference type="UniPathway" id="UPA00148">
    <property type="reaction ID" value="UER00211"/>
</dbReference>
<dbReference type="UniPathway" id="UPA00148">
    <property type="reaction ID" value="UER00222"/>
</dbReference>
<dbReference type="UniPathway" id="UPA00262">
    <property type="reaction ID" value="UER00211"/>
</dbReference>
<dbReference type="UniPathway" id="UPA00262">
    <property type="reaction ID" value="UER00222"/>
</dbReference>
<dbReference type="UniPathway" id="UPA00262">
    <property type="reaction ID" value="UER00376"/>
</dbReference>
<dbReference type="Proteomes" id="UP000008205">
    <property type="component" value="Chromosome"/>
</dbReference>
<dbReference type="GO" id="GO:0051287">
    <property type="term" value="F:NAD binding"/>
    <property type="evidence" value="ECO:0007669"/>
    <property type="project" value="InterPro"/>
</dbReference>
<dbReference type="GO" id="GO:0043115">
    <property type="term" value="F:precorrin-2 dehydrogenase activity"/>
    <property type="evidence" value="ECO:0007669"/>
    <property type="project" value="UniProtKB-UniRule"/>
</dbReference>
<dbReference type="GO" id="GO:0051266">
    <property type="term" value="F:sirohydrochlorin ferrochelatase activity"/>
    <property type="evidence" value="ECO:0007669"/>
    <property type="project" value="UniProtKB-EC"/>
</dbReference>
<dbReference type="GO" id="GO:0004851">
    <property type="term" value="F:uroporphyrin-III C-methyltransferase activity"/>
    <property type="evidence" value="ECO:0007669"/>
    <property type="project" value="UniProtKB-UniRule"/>
</dbReference>
<dbReference type="GO" id="GO:0009236">
    <property type="term" value="P:cobalamin biosynthetic process"/>
    <property type="evidence" value="ECO:0007669"/>
    <property type="project" value="UniProtKB-UniRule"/>
</dbReference>
<dbReference type="GO" id="GO:0032259">
    <property type="term" value="P:methylation"/>
    <property type="evidence" value="ECO:0007669"/>
    <property type="project" value="UniProtKB-KW"/>
</dbReference>
<dbReference type="GO" id="GO:0019354">
    <property type="term" value="P:siroheme biosynthetic process"/>
    <property type="evidence" value="ECO:0007669"/>
    <property type="project" value="UniProtKB-UniRule"/>
</dbReference>
<dbReference type="CDD" id="cd11642">
    <property type="entry name" value="SUMT"/>
    <property type="match status" value="1"/>
</dbReference>
<dbReference type="FunFam" id="1.10.8.210:FF:000001">
    <property type="entry name" value="Siroheme synthase"/>
    <property type="match status" value="1"/>
</dbReference>
<dbReference type="FunFam" id="3.30.160.110:FF:000001">
    <property type="entry name" value="Siroheme synthase"/>
    <property type="match status" value="1"/>
</dbReference>
<dbReference type="FunFam" id="3.30.950.10:FF:000001">
    <property type="entry name" value="Siroheme synthase"/>
    <property type="match status" value="1"/>
</dbReference>
<dbReference type="FunFam" id="3.40.1010.10:FF:000001">
    <property type="entry name" value="Siroheme synthase"/>
    <property type="match status" value="1"/>
</dbReference>
<dbReference type="FunFam" id="3.40.50.720:FF:000092">
    <property type="entry name" value="Siroheme synthase"/>
    <property type="match status" value="1"/>
</dbReference>
<dbReference type="Gene3D" id="3.40.1010.10">
    <property type="entry name" value="Cobalt-precorrin-4 Transmethylase, Domain 1"/>
    <property type="match status" value="1"/>
</dbReference>
<dbReference type="Gene3D" id="3.30.950.10">
    <property type="entry name" value="Methyltransferase, Cobalt-precorrin-4 Transmethylase, Domain 2"/>
    <property type="match status" value="1"/>
</dbReference>
<dbReference type="Gene3D" id="3.40.50.720">
    <property type="entry name" value="NAD(P)-binding Rossmann-like Domain"/>
    <property type="match status" value="1"/>
</dbReference>
<dbReference type="Gene3D" id="1.10.8.210">
    <property type="entry name" value="Sirohaem synthase, dimerisation domain"/>
    <property type="match status" value="1"/>
</dbReference>
<dbReference type="Gene3D" id="3.30.160.110">
    <property type="entry name" value="Siroheme synthase, domain 2"/>
    <property type="match status" value="1"/>
</dbReference>
<dbReference type="HAMAP" id="MF_01646">
    <property type="entry name" value="Siroheme_synth"/>
    <property type="match status" value="1"/>
</dbReference>
<dbReference type="InterPro" id="IPR000878">
    <property type="entry name" value="4pyrrol_Mease"/>
</dbReference>
<dbReference type="InterPro" id="IPR035996">
    <property type="entry name" value="4pyrrol_Methylase_sf"/>
</dbReference>
<dbReference type="InterPro" id="IPR014777">
    <property type="entry name" value="4pyrrole_Mease_sub1"/>
</dbReference>
<dbReference type="InterPro" id="IPR014776">
    <property type="entry name" value="4pyrrole_Mease_sub2"/>
</dbReference>
<dbReference type="InterPro" id="IPR006366">
    <property type="entry name" value="CobA/CysG_C"/>
</dbReference>
<dbReference type="InterPro" id="IPR036291">
    <property type="entry name" value="NAD(P)-bd_dom_sf"/>
</dbReference>
<dbReference type="InterPro" id="IPR050161">
    <property type="entry name" value="Siro_Cobalamin_biosynth"/>
</dbReference>
<dbReference type="InterPro" id="IPR037115">
    <property type="entry name" value="Sirohaem_synt_dimer_dom_sf"/>
</dbReference>
<dbReference type="InterPro" id="IPR012409">
    <property type="entry name" value="Sirohaem_synth"/>
</dbReference>
<dbReference type="InterPro" id="IPR028281">
    <property type="entry name" value="Sirohaem_synthase_central"/>
</dbReference>
<dbReference type="InterPro" id="IPR019478">
    <property type="entry name" value="Sirohaem_synthase_dimer_dom"/>
</dbReference>
<dbReference type="InterPro" id="IPR006367">
    <property type="entry name" value="Sirohaem_synthase_N"/>
</dbReference>
<dbReference type="InterPro" id="IPR003043">
    <property type="entry name" value="Uropor_MeTrfase_CS"/>
</dbReference>
<dbReference type="NCBIfam" id="TIGR01469">
    <property type="entry name" value="cobA_cysG_Cterm"/>
    <property type="match status" value="1"/>
</dbReference>
<dbReference type="NCBIfam" id="TIGR01470">
    <property type="entry name" value="cysG_Nterm"/>
    <property type="match status" value="1"/>
</dbReference>
<dbReference type="NCBIfam" id="NF004790">
    <property type="entry name" value="PRK06136.1"/>
    <property type="match status" value="1"/>
</dbReference>
<dbReference type="NCBIfam" id="NF007922">
    <property type="entry name" value="PRK10637.1"/>
    <property type="match status" value="1"/>
</dbReference>
<dbReference type="PANTHER" id="PTHR45790:SF1">
    <property type="entry name" value="SIROHEME SYNTHASE"/>
    <property type="match status" value="1"/>
</dbReference>
<dbReference type="PANTHER" id="PTHR45790">
    <property type="entry name" value="SIROHEME SYNTHASE-RELATED"/>
    <property type="match status" value="1"/>
</dbReference>
<dbReference type="Pfam" id="PF10414">
    <property type="entry name" value="CysG_dimeriser"/>
    <property type="match status" value="1"/>
</dbReference>
<dbReference type="Pfam" id="PF13241">
    <property type="entry name" value="NAD_binding_7"/>
    <property type="match status" value="1"/>
</dbReference>
<dbReference type="Pfam" id="PF14824">
    <property type="entry name" value="Sirohm_synth_M"/>
    <property type="match status" value="1"/>
</dbReference>
<dbReference type="Pfam" id="PF00590">
    <property type="entry name" value="TP_methylase"/>
    <property type="match status" value="1"/>
</dbReference>
<dbReference type="PIRSF" id="PIRSF036426">
    <property type="entry name" value="Sirohaem_synth"/>
    <property type="match status" value="1"/>
</dbReference>
<dbReference type="SUPFAM" id="SSF51735">
    <property type="entry name" value="NAD(P)-binding Rossmann-fold domains"/>
    <property type="match status" value="1"/>
</dbReference>
<dbReference type="SUPFAM" id="SSF75615">
    <property type="entry name" value="Siroheme synthase middle domains-like"/>
    <property type="match status" value="1"/>
</dbReference>
<dbReference type="SUPFAM" id="SSF53790">
    <property type="entry name" value="Tetrapyrrole methylase"/>
    <property type="match status" value="1"/>
</dbReference>
<dbReference type="PROSITE" id="PS00839">
    <property type="entry name" value="SUMT_1"/>
    <property type="match status" value="1"/>
</dbReference>
<dbReference type="PROSITE" id="PS00840">
    <property type="entry name" value="SUMT_2"/>
    <property type="match status" value="1"/>
</dbReference>
<name>CYSG_ECO27</name>
<reference key="1">
    <citation type="journal article" date="2009" name="J. Bacteriol.">
        <title>Complete genome sequence and comparative genome analysis of enteropathogenic Escherichia coli O127:H6 strain E2348/69.</title>
        <authorList>
            <person name="Iguchi A."/>
            <person name="Thomson N.R."/>
            <person name="Ogura Y."/>
            <person name="Saunders D."/>
            <person name="Ooka T."/>
            <person name="Henderson I.R."/>
            <person name="Harris D."/>
            <person name="Asadulghani M."/>
            <person name="Kurokawa K."/>
            <person name="Dean P."/>
            <person name="Kenny B."/>
            <person name="Quail M.A."/>
            <person name="Thurston S."/>
            <person name="Dougan G."/>
            <person name="Hayashi T."/>
            <person name="Parkhill J."/>
            <person name="Frankel G."/>
        </authorList>
    </citation>
    <scope>NUCLEOTIDE SEQUENCE [LARGE SCALE GENOMIC DNA]</scope>
    <source>
        <strain>E2348/69 / EPEC</strain>
    </source>
</reference>
<comment type="function">
    <text evidence="1">Multifunctional enzyme that catalyzes the SAM-dependent methylations of uroporphyrinogen III at position C-2 and C-7 to form precorrin-2 via precorrin-1. Then it catalyzes the NAD-dependent ring dehydrogenation of precorrin-2 to yield sirohydrochlorin. Finally, it catalyzes the ferrochelation of sirohydrochlorin to yield siroheme.</text>
</comment>
<comment type="catalytic activity">
    <reaction evidence="1">
        <text>uroporphyrinogen III + 2 S-adenosyl-L-methionine = precorrin-2 + 2 S-adenosyl-L-homocysteine + H(+)</text>
        <dbReference type="Rhea" id="RHEA:32459"/>
        <dbReference type="ChEBI" id="CHEBI:15378"/>
        <dbReference type="ChEBI" id="CHEBI:57308"/>
        <dbReference type="ChEBI" id="CHEBI:57856"/>
        <dbReference type="ChEBI" id="CHEBI:58827"/>
        <dbReference type="ChEBI" id="CHEBI:59789"/>
        <dbReference type="EC" id="2.1.1.107"/>
    </reaction>
</comment>
<comment type="catalytic activity">
    <reaction evidence="1">
        <text>precorrin-2 + NAD(+) = sirohydrochlorin + NADH + 2 H(+)</text>
        <dbReference type="Rhea" id="RHEA:15613"/>
        <dbReference type="ChEBI" id="CHEBI:15378"/>
        <dbReference type="ChEBI" id="CHEBI:57540"/>
        <dbReference type="ChEBI" id="CHEBI:57945"/>
        <dbReference type="ChEBI" id="CHEBI:58351"/>
        <dbReference type="ChEBI" id="CHEBI:58827"/>
        <dbReference type="EC" id="1.3.1.76"/>
    </reaction>
</comment>
<comment type="catalytic activity">
    <reaction evidence="1">
        <text>siroheme + 2 H(+) = sirohydrochlorin + Fe(2+)</text>
        <dbReference type="Rhea" id="RHEA:24360"/>
        <dbReference type="ChEBI" id="CHEBI:15378"/>
        <dbReference type="ChEBI" id="CHEBI:29033"/>
        <dbReference type="ChEBI" id="CHEBI:58351"/>
        <dbReference type="ChEBI" id="CHEBI:60052"/>
        <dbReference type="EC" id="4.99.1.4"/>
    </reaction>
</comment>
<comment type="pathway">
    <text evidence="1">Cofactor biosynthesis; adenosylcobalamin biosynthesis; precorrin-2 from uroporphyrinogen III: step 1/1.</text>
</comment>
<comment type="pathway">
    <text evidence="1">Cofactor biosynthesis; adenosylcobalamin biosynthesis; sirohydrochlorin from precorrin-2: step 1/1.</text>
</comment>
<comment type="pathway">
    <text evidence="1">Porphyrin-containing compound metabolism; siroheme biosynthesis; precorrin-2 from uroporphyrinogen III: step 1/1.</text>
</comment>
<comment type="pathway">
    <text evidence="1">Porphyrin-containing compound metabolism; siroheme biosynthesis; siroheme from sirohydrochlorin: step 1/1.</text>
</comment>
<comment type="pathway">
    <text evidence="1">Porphyrin-containing compound metabolism; siroheme biosynthesis; sirohydrochlorin from precorrin-2: step 1/1.</text>
</comment>
<comment type="similarity">
    <text evidence="1">In the N-terminal section; belongs to the precorrin-2 dehydrogenase / sirohydrochlorin ferrochelatase family.</text>
</comment>
<comment type="similarity">
    <text evidence="1">In the C-terminal section; belongs to the precorrin methyltransferase family.</text>
</comment>